<keyword id="KW-0025">Alternative splicing</keyword>
<keyword id="KW-0130">Cell adhesion</keyword>
<keyword id="KW-0217">Developmental protein</keyword>
<keyword id="KW-1015">Disulfide bond</keyword>
<keyword id="KW-0325">Glycoprotein</keyword>
<keyword id="KW-0393">Immunoglobulin domain</keyword>
<keyword id="KW-0472">Membrane</keyword>
<keyword id="KW-0597">Phosphoprotein</keyword>
<keyword id="KW-1185">Reference proteome</keyword>
<keyword id="KW-0677">Repeat</keyword>
<keyword id="KW-0732">Signal</keyword>
<keyword id="KW-0812">Transmembrane</keyword>
<keyword id="KW-1133">Transmembrane helix</keyword>
<gene>
    <name evidence="10" type="primary">sdk</name>
    <name type="ORF">CG5227</name>
</gene>
<name>SDK_DROME</name>
<proteinExistence type="evidence at protein level"/>
<comment type="function">
    <text evidence="7">Participates in homotypic or heterotypic interactions in the eye during pattern formation to prevent extra cells from joining the precluster and differentiating as photoreceptor cells.</text>
</comment>
<comment type="subcellular location">
    <subcellularLocation>
        <location evidence="9">Membrane</location>
        <topology evidence="9">Single-pass type I membrane protein</topology>
    </subcellularLocation>
</comment>
<comment type="alternative products">
    <event type="alternative splicing"/>
    <isoform>
        <id>O97394-1</id>
        <name>A</name>
        <name>D</name>
        <sequence type="displayed"/>
    </isoform>
    <isoform>
        <id>O97394-2</id>
        <name>C</name>
        <sequence type="described" ref="VSP_017529"/>
    </isoform>
</comment>
<comment type="similarity">
    <text evidence="9">Belongs to the sidekick family.</text>
</comment>
<comment type="sequence caution" evidence="9">
    <conflict type="frameshift">
        <sequence resource="EMBL-CDS" id="AAD09632"/>
    </conflict>
</comment>
<reference key="1">
    <citation type="journal article" date="1997" name="Development">
        <title>The sidekick gene, a member of the immunoglobulin superfamily, is required for pattern formation in the Drosophila eye.</title>
        <authorList>
            <person name="Nguyen D.N.T."/>
            <person name="Liu Y."/>
            <person name="Litsky M.L."/>
            <person name="Reinke R."/>
        </authorList>
    </citation>
    <scope>NUCLEOTIDE SEQUENCE [MRNA] (ISOFORM A)</scope>
    <scope>ALTERNATIVE SPLICING (ISOFORM C)</scope>
    <scope>FUNCTION</scope>
    <source>
        <tissue>Eye imaginal disk</tissue>
    </source>
</reference>
<reference key="2">
    <citation type="journal article" date="2000" name="Science">
        <title>The genome sequence of Drosophila melanogaster.</title>
        <authorList>
            <person name="Adams M.D."/>
            <person name="Celniker S.E."/>
            <person name="Holt R.A."/>
            <person name="Evans C.A."/>
            <person name="Gocayne J.D."/>
            <person name="Amanatides P.G."/>
            <person name="Scherer S.E."/>
            <person name="Li P.W."/>
            <person name="Hoskins R.A."/>
            <person name="Galle R.F."/>
            <person name="George R.A."/>
            <person name="Lewis S.E."/>
            <person name="Richards S."/>
            <person name="Ashburner M."/>
            <person name="Henderson S.N."/>
            <person name="Sutton G.G."/>
            <person name="Wortman J.R."/>
            <person name="Yandell M.D."/>
            <person name="Zhang Q."/>
            <person name="Chen L.X."/>
            <person name="Brandon R.C."/>
            <person name="Rogers Y.-H.C."/>
            <person name="Blazej R.G."/>
            <person name="Champe M."/>
            <person name="Pfeiffer B.D."/>
            <person name="Wan K.H."/>
            <person name="Doyle C."/>
            <person name="Baxter E.G."/>
            <person name="Helt G."/>
            <person name="Nelson C.R."/>
            <person name="Miklos G.L.G."/>
            <person name="Abril J.F."/>
            <person name="Agbayani A."/>
            <person name="An H.-J."/>
            <person name="Andrews-Pfannkoch C."/>
            <person name="Baldwin D."/>
            <person name="Ballew R.M."/>
            <person name="Basu A."/>
            <person name="Baxendale J."/>
            <person name="Bayraktaroglu L."/>
            <person name="Beasley E.M."/>
            <person name="Beeson K.Y."/>
            <person name="Benos P.V."/>
            <person name="Berman B.P."/>
            <person name="Bhandari D."/>
            <person name="Bolshakov S."/>
            <person name="Borkova D."/>
            <person name="Botchan M.R."/>
            <person name="Bouck J."/>
            <person name="Brokstein P."/>
            <person name="Brottier P."/>
            <person name="Burtis K.C."/>
            <person name="Busam D.A."/>
            <person name="Butler H."/>
            <person name="Cadieu E."/>
            <person name="Center A."/>
            <person name="Chandra I."/>
            <person name="Cherry J.M."/>
            <person name="Cawley S."/>
            <person name="Dahlke C."/>
            <person name="Davenport L.B."/>
            <person name="Davies P."/>
            <person name="de Pablos B."/>
            <person name="Delcher A."/>
            <person name="Deng Z."/>
            <person name="Mays A.D."/>
            <person name="Dew I."/>
            <person name="Dietz S.M."/>
            <person name="Dodson K."/>
            <person name="Doup L.E."/>
            <person name="Downes M."/>
            <person name="Dugan-Rocha S."/>
            <person name="Dunkov B.C."/>
            <person name="Dunn P."/>
            <person name="Durbin K.J."/>
            <person name="Evangelista C.C."/>
            <person name="Ferraz C."/>
            <person name="Ferriera S."/>
            <person name="Fleischmann W."/>
            <person name="Fosler C."/>
            <person name="Gabrielian A.E."/>
            <person name="Garg N.S."/>
            <person name="Gelbart W.M."/>
            <person name="Glasser K."/>
            <person name="Glodek A."/>
            <person name="Gong F."/>
            <person name="Gorrell J.H."/>
            <person name="Gu Z."/>
            <person name="Guan P."/>
            <person name="Harris M."/>
            <person name="Harris N.L."/>
            <person name="Harvey D.A."/>
            <person name="Heiman T.J."/>
            <person name="Hernandez J.R."/>
            <person name="Houck J."/>
            <person name="Hostin D."/>
            <person name="Houston K.A."/>
            <person name="Howland T.J."/>
            <person name="Wei M.-H."/>
            <person name="Ibegwam C."/>
            <person name="Jalali M."/>
            <person name="Kalush F."/>
            <person name="Karpen G.H."/>
            <person name="Ke Z."/>
            <person name="Kennison J.A."/>
            <person name="Ketchum K.A."/>
            <person name="Kimmel B.E."/>
            <person name="Kodira C.D."/>
            <person name="Kraft C.L."/>
            <person name="Kravitz S."/>
            <person name="Kulp D."/>
            <person name="Lai Z."/>
            <person name="Lasko P."/>
            <person name="Lei Y."/>
            <person name="Levitsky A.A."/>
            <person name="Li J.H."/>
            <person name="Li Z."/>
            <person name="Liang Y."/>
            <person name="Lin X."/>
            <person name="Liu X."/>
            <person name="Mattei B."/>
            <person name="McIntosh T.C."/>
            <person name="McLeod M.P."/>
            <person name="McPherson D."/>
            <person name="Merkulov G."/>
            <person name="Milshina N.V."/>
            <person name="Mobarry C."/>
            <person name="Morris J."/>
            <person name="Moshrefi A."/>
            <person name="Mount S.M."/>
            <person name="Moy M."/>
            <person name="Murphy B."/>
            <person name="Murphy L."/>
            <person name="Muzny D.M."/>
            <person name="Nelson D.L."/>
            <person name="Nelson D.R."/>
            <person name="Nelson K.A."/>
            <person name="Nixon K."/>
            <person name="Nusskern D.R."/>
            <person name="Pacleb J.M."/>
            <person name="Palazzolo M."/>
            <person name="Pittman G.S."/>
            <person name="Pan S."/>
            <person name="Pollard J."/>
            <person name="Puri V."/>
            <person name="Reese M.G."/>
            <person name="Reinert K."/>
            <person name="Remington K."/>
            <person name="Saunders R.D.C."/>
            <person name="Scheeler F."/>
            <person name="Shen H."/>
            <person name="Shue B.C."/>
            <person name="Siden-Kiamos I."/>
            <person name="Simpson M."/>
            <person name="Skupski M.P."/>
            <person name="Smith T.J."/>
            <person name="Spier E."/>
            <person name="Spradling A.C."/>
            <person name="Stapleton M."/>
            <person name="Strong R."/>
            <person name="Sun E."/>
            <person name="Svirskas R."/>
            <person name="Tector C."/>
            <person name="Turner R."/>
            <person name="Venter E."/>
            <person name="Wang A.H."/>
            <person name="Wang X."/>
            <person name="Wang Z.-Y."/>
            <person name="Wassarman D.A."/>
            <person name="Weinstock G.M."/>
            <person name="Weissenbach J."/>
            <person name="Williams S.M."/>
            <person name="Woodage T."/>
            <person name="Worley K.C."/>
            <person name="Wu D."/>
            <person name="Yang S."/>
            <person name="Yao Q.A."/>
            <person name="Ye J."/>
            <person name="Yeh R.-F."/>
            <person name="Zaveri J.S."/>
            <person name="Zhan M."/>
            <person name="Zhang G."/>
            <person name="Zhao Q."/>
            <person name="Zheng L."/>
            <person name="Zheng X.H."/>
            <person name="Zhong F.N."/>
            <person name="Zhong W."/>
            <person name="Zhou X."/>
            <person name="Zhu S.C."/>
            <person name="Zhu X."/>
            <person name="Smith H.O."/>
            <person name="Gibbs R.A."/>
            <person name="Myers E.W."/>
            <person name="Rubin G.M."/>
            <person name="Venter J.C."/>
        </authorList>
    </citation>
    <scope>NUCLEOTIDE SEQUENCE [LARGE SCALE GENOMIC DNA]</scope>
    <source>
        <strain>Berkeley</strain>
    </source>
</reference>
<reference key="3">
    <citation type="journal article" date="2002" name="Genome Biol.">
        <title>Annotation of the Drosophila melanogaster euchromatic genome: a systematic review.</title>
        <authorList>
            <person name="Misra S."/>
            <person name="Crosby M.A."/>
            <person name="Mungall C.J."/>
            <person name="Matthews B.B."/>
            <person name="Campbell K.S."/>
            <person name="Hradecky P."/>
            <person name="Huang Y."/>
            <person name="Kaminker J.S."/>
            <person name="Millburn G.H."/>
            <person name="Prochnik S.E."/>
            <person name="Smith C.D."/>
            <person name="Tupy J.L."/>
            <person name="Whitfield E.J."/>
            <person name="Bayraktaroglu L."/>
            <person name="Berman B.P."/>
            <person name="Bettencourt B.R."/>
            <person name="Celniker S.E."/>
            <person name="de Grey A.D.N.J."/>
            <person name="Drysdale R.A."/>
            <person name="Harris N.L."/>
            <person name="Richter J."/>
            <person name="Russo S."/>
            <person name="Schroeder A.J."/>
            <person name="Shu S.Q."/>
            <person name="Stapleton M."/>
            <person name="Yamada C."/>
            <person name="Ashburner M."/>
            <person name="Gelbart W.M."/>
            <person name="Rubin G.M."/>
            <person name="Lewis S.E."/>
        </authorList>
    </citation>
    <scope>GENOME REANNOTATION</scope>
    <scope>ALTERNATIVE SPLICING</scope>
    <source>
        <strain>Berkeley</strain>
    </source>
</reference>
<reference key="4">
    <citation type="journal article" date="2000" name="Science">
        <title>From sequence to chromosome: the tip of the X chromosome of D. melanogaster.</title>
        <authorList>
            <person name="Benos P.V."/>
            <person name="Gatt M.K."/>
            <person name="Ashburner M."/>
            <person name="Murphy L."/>
            <person name="Harris D."/>
            <person name="Barrell B.G."/>
            <person name="Ferraz C."/>
            <person name="Vidal S."/>
            <person name="Brun C."/>
            <person name="Demailles J."/>
            <person name="Cadieu E."/>
            <person name="Dreano S."/>
            <person name="Gloux S."/>
            <person name="Lelaure V."/>
            <person name="Mottier S."/>
            <person name="Galibert F."/>
            <person name="Borkova D."/>
            <person name="Minana B."/>
            <person name="Kafatos F.C."/>
            <person name="Louis C."/>
            <person name="Siden-Kiamos I."/>
            <person name="Bolshakov S."/>
            <person name="Papagiannakis G."/>
            <person name="Spanos L."/>
            <person name="Cox S."/>
            <person name="Madueno E."/>
            <person name="de Pablos B."/>
            <person name="Modolell J."/>
            <person name="Peter A."/>
            <person name="Schoettler P."/>
            <person name="Werner M."/>
            <person name="Mourkioti F."/>
            <person name="Beinert N."/>
            <person name="Dowe G."/>
            <person name="Schaefer U."/>
            <person name="Jaeckle H."/>
            <person name="Bucheton A."/>
            <person name="Callister D.M."/>
            <person name="Campbell L.A."/>
            <person name="Darlamitsou A."/>
            <person name="Henderson N.S."/>
            <person name="McMillan P.J."/>
            <person name="Salles C."/>
            <person name="Tait E.A."/>
            <person name="Valenti P."/>
            <person name="Saunders R.D.C."/>
            <person name="Glover D.M."/>
        </authorList>
    </citation>
    <scope>NUCLEOTIDE SEQUENCE [LARGE SCALE GENOMIC DNA]</scope>
    <source>
        <strain>Oregon-R</strain>
    </source>
</reference>
<reference key="5">
    <citation type="submission" date="2007-12" db="EMBL/GenBank/DDBJ databases">
        <authorList>
            <person name="Stapleton M."/>
            <person name="Carlson J.W."/>
            <person name="Frise E."/>
            <person name="Kapadia B."/>
            <person name="Park S."/>
            <person name="Wan K.H."/>
            <person name="Yu C."/>
            <person name="Celniker S.E."/>
        </authorList>
    </citation>
    <scope>NUCLEOTIDE SEQUENCE [LARGE SCALE MRNA] (ISOFORM A)</scope>
    <source>
        <strain>Berkeley</strain>
        <tissue>Embryo</tissue>
    </source>
</reference>
<reference key="6">
    <citation type="journal article" date="2007" name="Glycobiology">
        <title>Identification of N-glycosylated proteins from the central nervous system of Drosophila melanogaster.</title>
        <authorList>
            <person name="Koles K."/>
            <person name="Lim J.-M."/>
            <person name="Aoki K."/>
            <person name="Porterfield M."/>
            <person name="Tiemeyer M."/>
            <person name="Wells L."/>
            <person name="Panin V."/>
        </authorList>
    </citation>
    <scope>GLYCOSYLATION [LARGE SCALE ANALYSIS] AT ASN-870</scope>
    <scope>IDENTIFICATION BY MASS SPECTROMETRY</scope>
    <source>
        <strain>Oregon-R</strain>
        <tissue>Head</tissue>
    </source>
</reference>
<reference key="7">
    <citation type="journal article" date="2008" name="J. Proteome Res.">
        <title>Phosphoproteome analysis of Drosophila melanogaster embryos.</title>
        <authorList>
            <person name="Zhai B."/>
            <person name="Villen J."/>
            <person name="Beausoleil S.A."/>
            <person name="Mintseris J."/>
            <person name="Gygi S.P."/>
        </authorList>
    </citation>
    <scope>PHOSPHORYLATION [LARGE SCALE ANALYSIS] AT SER-2071; THR-2074; SER-2113 AND SER-2117</scope>
    <scope>IDENTIFICATION BY MASS SPECTROMETRY</scope>
    <source>
        <tissue>Embryo</tissue>
    </source>
</reference>
<accession>O97394</accession>
<accession>A4V3T7</accession>
<accession>A9UNG5</accession>
<accession>Q0KHX5</accession>
<accession>Q86BQ7</accession>
<accession>Q9U1M1</accession>
<accession>Q9UB11</accession>
<accession>Q9W5D9</accession>
<feature type="signal peptide" evidence="1">
    <location>
        <begin position="1"/>
        <end position="47"/>
    </location>
</feature>
<feature type="chain" id="PRO_0000226983" description="Protein sidekick">
    <location>
        <begin position="48"/>
        <end position="2224"/>
    </location>
</feature>
<feature type="topological domain" description="Extracellular" evidence="1">
    <location>
        <begin position="48"/>
        <end position="2001"/>
    </location>
</feature>
<feature type="transmembrane region" description="Helical" evidence="1">
    <location>
        <begin position="2002"/>
        <end position="2022"/>
    </location>
</feature>
<feature type="topological domain" description="Cytoplasmic" evidence="1">
    <location>
        <begin position="2023"/>
        <end position="2224"/>
    </location>
</feature>
<feature type="domain" description="Ig-like C2-type 1">
    <location>
        <begin position="72"/>
        <end position="155"/>
    </location>
</feature>
<feature type="domain" description="Ig-like C2-type 2">
    <location>
        <begin position="261"/>
        <end position="355"/>
    </location>
</feature>
<feature type="domain" description="Ig-like C2-type 3">
    <location>
        <begin position="359"/>
        <end position="445"/>
    </location>
</feature>
<feature type="domain" description="Ig-like C2-type 4">
    <location>
        <begin position="455"/>
        <end position="541"/>
    </location>
</feature>
<feature type="domain" description="Ig-like C2-type 5">
    <location>
        <begin position="546"/>
        <end position="636"/>
    </location>
</feature>
<feature type="domain" description="Fibronectin type-III 1" evidence="3">
    <location>
        <begin position="643"/>
        <end position="753"/>
    </location>
</feature>
<feature type="domain" description="Fibronectin type-III 2" evidence="3">
    <location>
        <begin position="758"/>
        <end position="855"/>
    </location>
</feature>
<feature type="domain" description="Fibronectin type-III 3" evidence="3">
    <location>
        <begin position="860"/>
        <end position="967"/>
    </location>
</feature>
<feature type="domain" description="Fibronectin type-III 4" evidence="3">
    <location>
        <begin position="971"/>
        <end position="1065"/>
    </location>
</feature>
<feature type="domain" description="Fibronectin type-III 5" evidence="3">
    <location>
        <begin position="1069"/>
        <end position="1164"/>
    </location>
</feature>
<feature type="domain" description="Fibronectin type-III 6" evidence="3">
    <location>
        <begin position="1169"/>
        <end position="1270"/>
    </location>
</feature>
<feature type="domain" description="Fibronectin type-III 7" evidence="3">
    <location>
        <begin position="1275"/>
        <end position="1372"/>
    </location>
</feature>
<feature type="domain" description="Fibronectin type-III 8" evidence="3">
    <location>
        <begin position="1376"/>
        <end position="1469"/>
    </location>
</feature>
<feature type="domain" description="Fibronectin type-III 9" evidence="3">
    <location>
        <begin position="1474"/>
        <end position="1570"/>
    </location>
</feature>
<feature type="domain" description="Fibronectin type-III 10" evidence="3">
    <location>
        <begin position="1575"/>
        <end position="1677"/>
    </location>
</feature>
<feature type="domain" description="Fibronectin type-III 11" evidence="3">
    <location>
        <begin position="1682"/>
        <end position="1785"/>
    </location>
</feature>
<feature type="domain" description="Fibronectin type-III 12" evidence="3">
    <location>
        <begin position="1789"/>
        <end position="1883"/>
    </location>
</feature>
<feature type="domain" description="Fibronectin type-III 13" evidence="3">
    <location>
        <begin position="1885"/>
        <end position="1984"/>
    </location>
</feature>
<feature type="region of interest" description="Disordered" evidence="4">
    <location>
        <begin position="2068"/>
        <end position="2157"/>
    </location>
</feature>
<feature type="region of interest" description="Disordered" evidence="4">
    <location>
        <begin position="2171"/>
        <end position="2195"/>
    </location>
</feature>
<feature type="compositionally biased region" description="Low complexity" evidence="4">
    <location>
        <begin position="2073"/>
        <end position="2085"/>
    </location>
</feature>
<feature type="compositionally biased region" description="Basic and acidic residues" evidence="4">
    <location>
        <begin position="2112"/>
        <end position="2122"/>
    </location>
</feature>
<feature type="compositionally biased region" description="Basic and acidic residues" evidence="4">
    <location>
        <begin position="2144"/>
        <end position="2157"/>
    </location>
</feature>
<feature type="modified residue" description="Phosphoserine" evidence="6">
    <location>
        <position position="2071"/>
    </location>
</feature>
<feature type="modified residue" description="Phosphothreonine" evidence="6">
    <location>
        <position position="2074"/>
    </location>
</feature>
<feature type="modified residue" description="Phosphoserine" evidence="6">
    <location>
        <position position="2113"/>
    </location>
</feature>
<feature type="modified residue" description="Phosphoserine" evidence="6">
    <location>
        <position position="2117"/>
    </location>
</feature>
<feature type="glycosylation site" description="N-linked (GlcNAc...) asparagine" evidence="1">
    <location>
        <position position="164"/>
    </location>
</feature>
<feature type="glycosylation site" description="N-linked (GlcNAc...) asparagine" evidence="1">
    <location>
        <position position="250"/>
    </location>
</feature>
<feature type="glycosylation site" description="N-linked (GlcNAc...) asparagine" evidence="1">
    <location>
        <position position="318"/>
    </location>
</feature>
<feature type="glycosylation site" description="N-linked (GlcNAc...) asparagine" evidence="1">
    <location>
        <position position="327"/>
    </location>
</feature>
<feature type="glycosylation site" description="N-linked (GlcNAc...) asparagine" evidence="1">
    <location>
        <position position="463"/>
    </location>
</feature>
<feature type="glycosylation site" description="N-linked (GlcNAc...) asparagine" evidence="1">
    <location>
        <position position="485"/>
    </location>
</feature>
<feature type="glycosylation site" description="N-linked (GlcNAc...) asparagine" evidence="1">
    <location>
        <position position="491"/>
    </location>
</feature>
<feature type="glycosylation site" description="N-linked (GlcNAc...) asparagine" evidence="1">
    <location>
        <position position="628"/>
    </location>
</feature>
<feature type="glycosylation site" description="N-linked (GlcNAc...) asparagine" evidence="1">
    <location>
        <position position="661"/>
    </location>
</feature>
<feature type="glycosylation site" description="N-linked (GlcNAc...) asparagine" evidence="1">
    <location>
        <position position="707"/>
    </location>
</feature>
<feature type="glycosylation site" description="N-linked (GlcNAc...) asparagine" evidence="1">
    <location>
        <position position="809"/>
    </location>
</feature>
<feature type="glycosylation site" description="N-linked (GlcNAc...) asparagine" evidence="5">
    <location>
        <position position="870"/>
    </location>
</feature>
<feature type="glycosylation site" description="N-linked (GlcNAc...) asparagine" evidence="1">
    <location>
        <position position="942"/>
    </location>
</feature>
<feature type="glycosylation site" description="N-linked (GlcNAc...) asparagine" evidence="1">
    <location>
        <position position="1019"/>
    </location>
</feature>
<feature type="glycosylation site" description="N-linked (GlcNAc...) asparagine" evidence="1">
    <location>
        <position position="1094"/>
    </location>
</feature>
<feature type="glycosylation site" description="N-linked (GlcNAc...) asparagine" evidence="1">
    <location>
        <position position="1109"/>
    </location>
</feature>
<feature type="glycosylation site" description="N-linked (GlcNAc...) asparagine" evidence="1">
    <location>
        <position position="1172"/>
    </location>
</feature>
<feature type="glycosylation site" description="N-linked (GlcNAc...) asparagine" evidence="1">
    <location>
        <position position="1203"/>
    </location>
</feature>
<feature type="glycosylation site" description="N-linked (GlcNAc...) asparagine" evidence="1">
    <location>
        <position position="1282"/>
    </location>
</feature>
<feature type="glycosylation site" description="N-linked (GlcNAc...) asparagine" evidence="1">
    <location>
        <position position="1329"/>
    </location>
</feature>
<feature type="glycosylation site" description="N-linked (GlcNAc...) asparagine" evidence="1">
    <location>
        <position position="1379"/>
    </location>
</feature>
<feature type="glycosylation site" description="N-linked (GlcNAc...) asparagine" evidence="1">
    <location>
        <position position="1414"/>
    </location>
</feature>
<feature type="glycosylation site" description="N-linked (GlcNAc...) asparagine" evidence="1">
    <location>
        <position position="1420"/>
    </location>
</feature>
<feature type="glycosylation site" description="N-linked (GlcNAc...) asparagine" evidence="1">
    <location>
        <position position="1843"/>
    </location>
</feature>
<feature type="glycosylation site" description="N-linked (GlcNAc...) asparagine" evidence="1">
    <location>
        <position position="1876"/>
    </location>
</feature>
<feature type="disulfide bond" evidence="2">
    <location>
        <begin position="95"/>
        <end position="138"/>
    </location>
</feature>
<feature type="disulfide bond" evidence="2">
    <location>
        <begin position="283"/>
        <end position="336"/>
    </location>
</feature>
<feature type="disulfide bond" evidence="2">
    <location>
        <begin position="382"/>
        <end position="433"/>
    </location>
</feature>
<feature type="disulfide bond" evidence="2">
    <location>
        <begin position="476"/>
        <end position="525"/>
    </location>
</feature>
<feature type="disulfide bond" evidence="2">
    <location>
        <begin position="567"/>
        <end position="620"/>
    </location>
</feature>
<feature type="splice variant" id="VSP_017529" description="In isoform C." evidence="9">
    <original>D</original>
    <variation>EKGEPSFVY</variation>
    <location>
        <position position="1926"/>
    </location>
</feature>
<feature type="sequence conflict" description="In Ref. 5; ABY21742." evidence="9" ref="5">
    <original>K</original>
    <variation>Q</variation>
    <location>
        <position position="207"/>
    </location>
</feature>
<feature type="sequence conflict" description="In Ref. 1; AAD09632." evidence="9" ref="1">
    <original>G</original>
    <variation>P</variation>
    <location>
        <position position="521"/>
    </location>
</feature>
<feature type="sequence conflict" description="In Ref. 1; AAD09632." evidence="9" ref="1">
    <original>G</original>
    <variation>A</variation>
    <location>
        <position position="536"/>
    </location>
</feature>
<feature type="sequence conflict" description="In Ref. 1; AAD09632." evidence="9" ref="1">
    <original>R</original>
    <variation>A</variation>
    <location>
        <position position="658"/>
    </location>
</feature>
<feature type="sequence conflict" description="In Ref. 1; AAD09632." evidence="9" ref="1">
    <original>P</original>
    <variation>H</variation>
    <location>
        <position position="755"/>
    </location>
</feature>
<feature type="sequence conflict" description="In Ref. 1; AAD09632." evidence="9" ref="1">
    <original>R</original>
    <variation>A</variation>
    <location>
        <position position="1047"/>
    </location>
</feature>
<feature type="sequence conflict" description="In Ref. 1; AAD09632." evidence="9" ref="1">
    <original>V</original>
    <variation>E</variation>
    <location>
        <position position="1175"/>
    </location>
</feature>
<feature type="sequence conflict" description="In Ref. 1; AAD09632." evidence="9" ref="1">
    <original>A</original>
    <variation>R</variation>
    <location>
        <position position="1270"/>
    </location>
</feature>
<feature type="sequence conflict" description="In Ref. 1; AAD09632." evidence="9" ref="1">
    <original>R</original>
    <variation>D</variation>
    <location>
        <position position="1697"/>
    </location>
</feature>
<feature type="sequence conflict" description="In Ref. 1; AAD09632." evidence="9" ref="1">
    <original>L</original>
    <variation>K</variation>
    <location>
        <position position="1818"/>
    </location>
</feature>
<feature type="sequence conflict" description="In Ref. 1; AAD09632." evidence="9" ref="1">
    <original>T</original>
    <variation>S</variation>
    <location>
        <position position="1897"/>
    </location>
</feature>
<sequence length="2224" mass="246254">MLKSAASSLRRRRPKTTITATLAIEMPSQPKLASLLAVLVLLCYCDSCFFCYADANLQQQNSIVQQQQLQAPRFTTHPSSSGSIVSEGSTKILQCHALGYPQPTYRWLKDGVPVGDFSSSQFYRFHSTRREDAGSYQCIARNDAGSIFSEKSDVVVAYMGIFENTTEGRLTVISGHPAIFDMPPIESIPVPSVMWQSEDGPLNYDIKYAFTHANQLIILSADENDRKGYRAKAINTQLGKEESSAFVHLNVSGDPYIEVAPEIIVRPQDVKVKVGTGVVELQCIANARPLHELETLWLKDGLAVETAGVRHTLNDPWNRTLALLQANSSHSGEYTCQVRLRSGGYPAVSASARLQILEPPLFFTPMRAETFGEFGGQVQLTCDVVGEPTPQVKWFRNAESVDAHIESGRYTLNTDNTLVIKKLILDDAAMFQCLAINEAGENSASTWLRVKTSAPIMELPPQNVTALDGKDATISCRAVGSPNPNITWIYNETQLVDISSRVQILESGDLLISNIRSVDAGLYICVRANEAGSVKGEAYLSVLVRTQIIQPPVDTTVLLGLTATLQCKVSSDPSVPYNIDWYREGQSSTPISNSQRIGVQADGQLEIQAVRASDVGSYACVVTSPGGNETRAARLSVIELPFPPSNVKVERLPEPQQRSINVSWTPGFDGNSPISKFIIQRREVSELEKFVGPVPDPLLNWITELSNVSADQRWILLENLKAATVYQFRVSAVNRVGEGSPSEPSNVVELPQEAPSGPPVGFVGSARSMSEIITQWQPPLEEHRNGQILGYILRYRLFGYNNVPWSYQNITNEAQRNFLIQELITWKDYIVQIAAYNNMGVGVYTEGSKIKTKEGVPEAPPTNVKVEAINSTAARCRWTPPNPQQINGINQGYKIQAWQRRLIDGEWRDIERRMKTVPPSLIDPLAEQTAILGGLEKFTEYNISVLCFTDPGDGVASSQVAVMTMDDVPDEVTGLHFDDVSDRSVKVLWAPPRASNGILTGYTVRYQVKDRPDTLKSFNLTADDTELTVNQLQATTHYWFEIVAWTRVGSGIPKTATIQSGVEPVLPHAPTALALSNIEAFSVVLQFTPGFDGNSSITKWKVEGQTARNMTWFTICEINDPDAETLTVTGLVPFTQYRLRLSASNVVGSSKPSEATKDFQTIQARPKHPPFNVTVRAMSAQQLRVRWIPLQQTEWYGNPRGYNISYKQLVKTPGTIKYVPRSVVIEDHTANSHVLDSLEEWTLYEVKMNACNDVGCSKESDTAVERTREAVPSYGPLDVQANATSSTTVVVQWGEVPRQHRNGQIDGYKVFYAAADRGQQVLHKTIPNNATFTTTLTELKKYVVYHVQVLAYTRLGNGALSTPPIRVQTFEDTPGVPSNVSFPDVSLTMARIIWDVPVDPNGKILAYQVTYTLNGSAMLNYSREFPPSDRTFRATELLPGKYYSFSCTAQTRLGWGKIATALVYTTNNRERPQAPSVPQISRSQIQAHQITFSWTPGRDGFAPLRYYTVEMRENEGRWQPLPERVDPSLSSFTAVGLRPYMTYQFRIQATNDLGPSAFSRESVIVRTLPAAPAVGVGGLKVVPITTTSVRVQWSALETALWNGDASTGGYRILYQQLSDFPTALQSTPKTDVHGINENSVVLSDLQQDRNYEIVVLPFNSQGPGPATPPAAVYVGEAVPTGEPRAVDAAPISSTEVRLLWKPPKQSMQNGDILGYKIYYLVTYSPQALEPGRKWEEEIEVVSATATSHSLVFLDKFTEYRIQLLAFNPAGDGPRSAPITVKTLPGVPSAPLHLRFSDITMQSLEVTWDPPKFLNGEILGYLVTYETTEENEKFSKQVKQKVSNTTLRVQNLEEEVTYTFTVRAQTSVDYGPGISENVTTGPQDGSPVAPRDLILTKTLSSVEMHWINGPSGRGPILGYLIEAKKRDDSRWTKIEQTRKGMMQDFTVSYHILMPSTAYTFRVIAYNRYGISFPVYSKDSILTPSKLHLEYGYLQHKPFYRQTWFMVSLAATSIVIIVMVIAVLCVKSKSYKYKQEAQKTLEESMAMSIDERQELALELYRSRHGVGTGTLNSVGTLRSGTLGTLGRKSTSRPPPGVHLGKSPPRPSPASVAYHSDEESLKCYDENPDDSSVTEKPSEVSSSEASQHSESENESVRSDPHSFVNHYANVNDSLRQSWKKTKPVRNYSSYTDSEPEGSAVMSLNGGQIIVNNMARSRAPLPGFSSFV</sequence>
<evidence type="ECO:0000255" key="1"/>
<evidence type="ECO:0000255" key="2">
    <source>
        <dbReference type="PROSITE-ProRule" id="PRU00114"/>
    </source>
</evidence>
<evidence type="ECO:0000255" key="3">
    <source>
        <dbReference type="PROSITE-ProRule" id="PRU00316"/>
    </source>
</evidence>
<evidence type="ECO:0000256" key="4">
    <source>
        <dbReference type="SAM" id="MobiDB-lite"/>
    </source>
</evidence>
<evidence type="ECO:0000269" key="5">
    <source>
    </source>
</evidence>
<evidence type="ECO:0000269" key="6">
    <source>
    </source>
</evidence>
<evidence type="ECO:0000269" key="7">
    <source>
    </source>
</evidence>
<evidence type="ECO:0000303" key="8">
    <source>
    </source>
</evidence>
<evidence type="ECO:0000305" key="9"/>
<evidence type="ECO:0000312" key="10">
    <source>
        <dbReference type="FlyBase" id="FBgn0021764"/>
    </source>
</evidence>
<protein>
    <recommendedName>
        <fullName evidence="8">Protein sidekick</fullName>
    </recommendedName>
</protein>
<organism>
    <name type="scientific">Drosophila melanogaster</name>
    <name type="common">Fruit fly</name>
    <dbReference type="NCBI Taxonomy" id="7227"/>
    <lineage>
        <taxon>Eukaryota</taxon>
        <taxon>Metazoa</taxon>
        <taxon>Ecdysozoa</taxon>
        <taxon>Arthropoda</taxon>
        <taxon>Hexapoda</taxon>
        <taxon>Insecta</taxon>
        <taxon>Pterygota</taxon>
        <taxon>Neoptera</taxon>
        <taxon>Endopterygota</taxon>
        <taxon>Diptera</taxon>
        <taxon>Brachycera</taxon>
        <taxon>Muscomorpha</taxon>
        <taxon>Ephydroidea</taxon>
        <taxon>Drosophilidae</taxon>
        <taxon>Drosophila</taxon>
        <taxon>Sophophora</taxon>
    </lineage>
</organism>
<dbReference type="EMBL" id="U88578">
    <property type="protein sequence ID" value="AAD09632.1"/>
    <property type="status" value="ALT_FRAME"/>
    <property type="molecule type" value="mRNA"/>
</dbReference>
<dbReference type="EMBL" id="AE014298">
    <property type="protein sequence ID" value="AAN09027.4"/>
    <property type="molecule type" value="Genomic_DNA"/>
</dbReference>
<dbReference type="EMBL" id="AE014298">
    <property type="protein sequence ID" value="AAN09028.5"/>
    <property type="molecule type" value="Genomic_DNA"/>
</dbReference>
<dbReference type="EMBL" id="AE014298">
    <property type="protein sequence ID" value="AAN09029.4"/>
    <property type="molecule type" value="Genomic_DNA"/>
</dbReference>
<dbReference type="EMBL" id="AL132792">
    <property type="protein sequence ID" value="CAB65848.1"/>
    <property type="molecule type" value="Genomic_DNA"/>
</dbReference>
<dbReference type="EMBL" id="BT031329">
    <property type="protein sequence ID" value="ABY21742.1"/>
    <property type="molecule type" value="mRNA"/>
</dbReference>
<dbReference type="PIR" id="T13924">
    <property type="entry name" value="T13924"/>
</dbReference>
<dbReference type="RefSeq" id="NP_001162630.1">
    <molecule id="O97394-1"/>
    <property type="nucleotide sequence ID" value="NM_001169159.2"/>
</dbReference>
<dbReference type="RefSeq" id="NP_001162631.1">
    <molecule id="O97394-1"/>
    <property type="nucleotide sequence ID" value="NM_001169160.2"/>
</dbReference>
<dbReference type="RefSeq" id="NP_477289.5">
    <molecule id="O97394-1"/>
    <property type="nucleotide sequence ID" value="NM_057941.5"/>
</dbReference>
<dbReference type="RefSeq" id="NP_477290.6">
    <molecule id="O97394-2"/>
    <property type="nucleotide sequence ID" value="NM_057942.5"/>
</dbReference>
<dbReference type="RefSeq" id="NP_599141.5">
    <molecule id="O97394-1"/>
    <property type="nucleotide sequence ID" value="NM_134314.4"/>
</dbReference>
<dbReference type="RefSeq" id="NP_599142.5">
    <molecule id="O97394-1"/>
    <property type="nucleotide sequence ID" value="NM_134315.4"/>
</dbReference>
<dbReference type="SMR" id="O97394"/>
<dbReference type="BioGRID" id="57585">
    <property type="interactions" value="5"/>
</dbReference>
<dbReference type="DIP" id="DIP-20914N"/>
<dbReference type="FunCoup" id="O97394">
    <property type="interactions" value="360"/>
</dbReference>
<dbReference type="IntAct" id="O97394">
    <property type="interactions" value="46"/>
</dbReference>
<dbReference type="STRING" id="7227.FBpp0309170"/>
<dbReference type="GlyCosmos" id="O97394">
    <property type="glycosylation" value="25 sites, No reported glycans"/>
</dbReference>
<dbReference type="GlyGen" id="O97394">
    <property type="glycosylation" value="26 sites"/>
</dbReference>
<dbReference type="iPTMnet" id="O97394"/>
<dbReference type="PaxDb" id="7227-FBpp0291468"/>
<dbReference type="EnsemblMetazoa" id="FBtr0070130">
    <molecule id="O97394-1"/>
    <property type="protein sequence ID" value="FBpp0070125"/>
    <property type="gene ID" value="FBgn0021764"/>
</dbReference>
<dbReference type="EnsemblMetazoa" id="FBtr0070131">
    <molecule id="O97394-2"/>
    <property type="protein sequence ID" value="FBpp0070126"/>
    <property type="gene ID" value="FBgn0021764"/>
</dbReference>
<dbReference type="EnsemblMetazoa" id="FBtr0070132">
    <molecule id="O97394-1"/>
    <property type="protein sequence ID" value="FBpp0070127"/>
    <property type="gene ID" value="FBgn0021764"/>
</dbReference>
<dbReference type="EnsemblMetazoa" id="FBtr0070133">
    <molecule id="O97394-1"/>
    <property type="protein sequence ID" value="FBpp0070128"/>
    <property type="gene ID" value="FBgn0021764"/>
</dbReference>
<dbReference type="EnsemblMetazoa" id="FBtr0302259">
    <molecule id="O97394-1"/>
    <property type="protein sequence ID" value="FBpp0291468"/>
    <property type="gene ID" value="FBgn0021764"/>
</dbReference>
<dbReference type="EnsemblMetazoa" id="FBtr0302260">
    <molecule id="O97394-1"/>
    <property type="protein sequence ID" value="FBpp0291469"/>
    <property type="gene ID" value="FBgn0021764"/>
</dbReference>
<dbReference type="GeneID" id="31017"/>
<dbReference type="KEGG" id="dme:Dmel_CG5227"/>
<dbReference type="UCSC" id="CG5227-RA">
    <molecule id="O97394-1"/>
    <property type="organism name" value="d. melanogaster"/>
</dbReference>
<dbReference type="AGR" id="FB:FBgn0021764"/>
<dbReference type="CTD" id="31017"/>
<dbReference type="FlyBase" id="FBgn0021764">
    <property type="gene designation" value="sdk"/>
</dbReference>
<dbReference type="VEuPathDB" id="VectorBase:FBgn0021764"/>
<dbReference type="eggNOG" id="KOG3510">
    <property type="taxonomic scope" value="Eukaryota"/>
</dbReference>
<dbReference type="InParanoid" id="O97394"/>
<dbReference type="OrthoDB" id="8923679at2759"/>
<dbReference type="PhylomeDB" id="O97394"/>
<dbReference type="Reactome" id="R-DME-376176">
    <property type="pathway name" value="Signaling by ROBO receptors"/>
</dbReference>
<dbReference type="BioGRID-ORCS" id="31017">
    <property type="hits" value="0 hits in 3 CRISPR screens"/>
</dbReference>
<dbReference type="ChiTaRS" id="sdk">
    <property type="organism name" value="fly"/>
</dbReference>
<dbReference type="GenomeRNAi" id="31017"/>
<dbReference type="PRO" id="PR:O97394"/>
<dbReference type="Proteomes" id="UP000000803">
    <property type="component" value="Chromosome X"/>
</dbReference>
<dbReference type="Bgee" id="FBgn0021764">
    <property type="expression patterns" value="Expressed in ovarian follicle cell in post-embryonic organism and 206 other cell types or tissues"/>
</dbReference>
<dbReference type="ExpressionAtlas" id="O97394">
    <property type="expression patterns" value="baseline and differential"/>
</dbReference>
<dbReference type="GO" id="GO:0045177">
    <property type="term" value="C:apical part of cell"/>
    <property type="evidence" value="ECO:0000314"/>
    <property type="project" value="FlyBase"/>
</dbReference>
<dbReference type="GO" id="GO:0098595">
    <property type="term" value="C:perivitelline space"/>
    <property type="evidence" value="ECO:0007005"/>
    <property type="project" value="FlyBase"/>
</dbReference>
<dbReference type="GO" id="GO:0005886">
    <property type="term" value="C:plasma membrane"/>
    <property type="evidence" value="ECO:0000303"/>
    <property type="project" value="FlyBase"/>
</dbReference>
<dbReference type="GO" id="GO:0004895">
    <property type="term" value="F:cell adhesion receptor activity"/>
    <property type="evidence" value="ECO:0000315"/>
    <property type="project" value="FlyBase"/>
</dbReference>
<dbReference type="GO" id="GO:0098609">
    <property type="term" value="P:cell-cell adhesion"/>
    <property type="evidence" value="ECO:0000318"/>
    <property type="project" value="GO_Central"/>
</dbReference>
<dbReference type="GO" id="GO:0042675">
    <property type="term" value="P:compound eye cone cell differentiation"/>
    <property type="evidence" value="ECO:0000315"/>
    <property type="project" value="FlyBase"/>
</dbReference>
<dbReference type="GO" id="GO:0007156">
    <property type="term" value="P:homophilic cell adhesion via plasma membrane adhesion molecules"/>
    <property type="evidence" value="ECO:0000314"/>
    <property type="project" value="FlyBase"/>
</dbReference>
<dbReference type="GO" id="GO:0046533">
    <property type="term" value="P:negative regulation of photoreceptor cell differentiation"/>
    <property type="evidence" value="ECO:0000315"/>
    <property type="project" value="FlyBase"/>
</dbReference>
<dbReference type="GO" id="GO:0050931">
    <property type="term" value="P:pigment cell differentiation"/>
    <property type="evidence" value="ECO:0000315"/>
    <property type="project" value="FlyBase"/>
</dbReference>
<dbReference type="CDD" id="cd00063">
    <property type="entry name" value="FN3"/>
    <property type="match status" value="13"/>
</dbReference>
<dbReference type="CDD" id="cd00096">
    <property type="entry name" value="Ig"/>
    <property type="match status" value="1"/>
</dbReference>
<dbReference type="FunFam" id="2.60.40.10:FF:002352">
    <property type="entry name" value="Blast:Protein sidekick"/>
    <property type="match status" value="1"/>
</dbReference>
<dbReference type="FunFam" id="2.60.40.10:FF:000093">
    <property type="entry name" value="Down syndrome cell adhesion molecule, isoform B"/>
    <property type="match status" value="1"/>
</dbReference>
<dbReference type="FunFam" id="2.60.40.10:FF:000032">
    <property type="entry name" value="palladin isoform X1"/>
    <property type="match status" value="1"/>
</dbReference>
<dbReference type="FunFam" id="2.60.40.10:FF:001469">
    <property type="entry name" value="protein sidekick isoform X9"/>
    <property type="match status" value="1"/>
</dbReference>
<dbReference type="FunFam" id="2.60.40.10:FF:000158">
    <property type="entry name" value="Sidekick cell adhesion molecule 2"/>
    <property type="match status" value="1"/>
</dbReference>
<dbReference type="FunFam" id="2.60.40.10:FF:000209">
    <property type="entry name" value="Sidekick cell adhesion molecule 2"/>
    <property type="match status" value="1"/>
</dbReference>
<dbReference type="FunFam" id="2.60.40.10:FF:000231">
    <property type="entry name" value="Sidekick cell adhesion molecule 2"/>
    <property type="match status" value="1"/>
</dbReference>
<dbReference type="FunFam" id="2.60.40.10:FF:001132">
    <property type="entry name" value="Sidekick, isoform B"/>
    <property type="match status" value="1"/>
</dbReference>
<dbReference type="FunFam" id="2.60.40.10:FF:001362">
    <property type="entry name" value="Sidekick, isoform B"/>
    <property type="match status" value="1"/>
</dbReference>
<dbReference type="FunFam" id="2.60.40.10:FF:001432">
    <property type="entry name" value="Sidekick, isoform B"/>
    <property type="match status" value="1"/>
</dbReference>
<dbReference type="FunFam" id="2.60.40.10:FF:001549">
    <property type="entry name" value="Sidekick, isoform B"/>
    <property type="match status" value="1"/>
</dbReference>
<dbReference type="FunFam" id="2.60.40.10:FF:001715">
    <property type="entry name" value="Sidekick, isoform B"/>
    <property type="match status" value="1"/>
</dbReference>
<dbReference type="FunFam" id="2.60.40.10:FF:001722">
    <property type="entry name" value="Sidekick, isoform B"/>
    <property type="match status" value="1"/>
</dbReference>
<dbReference type="FunFam" id="2.60.40.10:FF:001849">
    <property type="entry name" value="Sidekick, isoform B"/>
    <property type="match status" value="1"/>
</dbReference>
<dbReference type="FunFam" id="2.60.40.10:FF:002022">
    <property type="entry name" value="Sidekick, isoform B"/>
    <property type="match status" value="1"/>
</dbReference>
<dbReference type="FunFam" id="2.60.40.10:FF:002259">
    <property type="entry name" value="Sidekick, isoform B"/>
    <property type="match status" value="1"/>
</dbReference>
<dbReference type="Gene3D" id="2.60.40.10">
    <property type="entry name" value="Immunoglobulins"/>
    <property type="match status" value="19"/>
</dbReference>
<dbReference type="InterPro" id="IPR003961">
    <property type="entry name" value="FN3_dom"/>
</dbReference>
<dbReference type="InterPro" id="IPR036116">
    <property type="entry name" value="FN3_sf"/>
</dbReference>
<dbReference type="InterPro" id="IPR007110">
    <property type="entry name" value="Ig-like_dom"/>
</dbReference>
<dbReference type="InterPro" id="IPR036179">
    <property type="entry name" value="Ig-like_dom_sf"/>
</dbReference>
<dbReference type="InterPro" id="IPR013783">
    <property type="entry name" value="Ig-like_fold"/>
</dbReference>
<dbReference type="InterPro" id="IPR013098">
    <property type="entry name" value="Ig_I-set"/>
</dbReference>
<dbReference type="InterPro" id="IPR003599">
    <property type="entry name" value="Ig_sub"/>
</dbReference>
<dbReference type="InterPro" id="IPR003598">
    <property type="entry name" value="Ig_sub2"/>
</dbReference>
<dbReference type="InterPro" id="IPR013106">
    <property type="entry name" value="Ig_V-set"/>
</dbReference>
<dbReference type="PANTHER" id="PTHR44170:SF6">
    <property type="entry name" value="CONTACTIN"/>
    <property type="match status" value="1"/>
</dbReference>
<dbReference type="PANTHER" id="PTHR44170">
    <property type="entry name" value="PROTEIN SIDEKICK"/>
    <property type="match status" value="1"/>
</dbReference>
<dbReference type="Pfam" id="PF00041">
    <property type="entry name" value="fn3"/>
    <property type="match status" value="13"/>
</dbReference>
<dbReference type="Pfam" id="PF07679">
    <property type="entry name" value="I-set"/>
    <property type="match status" value="4"/>
</dbReference>
<dbReference type="Pfam" id="PF13927">
    <property type="entry name" value="Ig_3"/>
    <property type="match status" value="1"/>
</dbReference>
<dbReference type="SMART" id="SM00060">
    <property type="entry name" value="FN3"/>
    <property type="match status" value="13"/>
</dbReference>
<dbReference type="SMART" id="SM00409">
    <property type="entry name" value="IG"/>
    <property type="match status" value="6"/>
</dbReference>
<dbReference type="SMART" id="SM00408">
    <property type="entry name" value="IGc2"/>
    <property type="match status" value="5"/>
</dbReference>
<dbReference type="SMART" id="SM00406">
    <property type="entry name" value="IGv"/>
    <property type="match status" value="3"/>
</dbReference>
<dbReference type="SUPFAM" id="SSF49265">
    <property type="entry name" value="Fibronectin type III"/>
    <property type="match status" value="7"/>
</dbReference>
<dbReference type="SUPFAM" id="SSF48726">
    <property type="entry name" value="Immunoglobulin"/>
    <property type="match status" value="5"/>
</dbReference>
<dbReference type="PROSITE" id="PS50853">
    <property type="entry name" value="FN3"/>
    <property type="match status" value="13"/>
</dbReference>
<dbReference type="PROSITE" id="PS50835">
    <property type="entry name" value="IG_LIKE"/>
    <property type="match status" value="5"/>
</dbReference>